<accession>P0DMI6</accession>
<proteinExistence type="evidence at protein level"/>
<reference key="1">
    <citation type="journal article" date="2013" name="Toxicon">
        <title>Heteromtoxin (HmTx), a novel heterodimeric phospholipase A(2) from Heterometrus laoticus scorpion venom.</title>
        <authorList>
            <person name="Incamnoi P."/>
            <person name="Patramanon R."/>
            <person name="Thammasirirak S."/>
            <person name="Chaveerach A."/>
            <person name="Uawonggul N."/>
            <person name="Sukprasert S."/>
            <person name="Rungsa P."/>
            <person name="Daduang J."/>
            <person name="Daduang S."/>
        </authorList>
    </citation>
    <scope>NUCLEOTIDE SEQUENCE [MRNA]</scope>
    <scope>PROTEIN SEQUENCE OF 62-77</scope>
    <scope>MASS SPECTROMETRY</scope>
    <scope>CATALYTIC ACTIVITY</scope>
    <scope>3D-STRUCTURE MODELING</scope>
    <source>
        <tissue>Venom</tissue>
        <tissue>Venom gland</tissue>
    </source>
</reference>
<dbReference type="EC" id="3.1.1.4"/>
<dbReference type="SMR" id="P0DMI6"/>
<dbReference type="GO" id="GO:0005576">
    <property type="term" value="C:extracellular region"/>
    <property type="evidence" value="ECO:0007669"/>
    <property type="project" value="UniProtKB-SubCell"/>
</dbReference>
<dbReference type="GO" id="GO:0005246">
    <property type="term" value="F:calcium channel regulator activity"/>
    <property type="evidence" value="ECO:0007669"/>
    <property type="project" value="UniProtKB-KW"/>
</dbReference>
<dbReference type="GO" id="GO:0046872">
    <property type="term" value="F:metal ion binding"/>
    <property type="evidence" value="ECO:0007669"/>
    <property type="project" value="UniProtKB-KW"/>
</dbReference>
<dbReference type="GO" id="GO:0004623">
    <property type="term" value="F:phospholipase A2 activity"/>
    <property type="evidence" value="ECO:0007669"/>
    <property type="project" value="UniProtKB-EC"/>
</dbReference>
<dbReference type="GO" id="GO:0090729">
    <property type="term" value="F:toxin activity"/>
    <property type="evidence" value="ECO:0007669"/>
    <property type="project" value="UniProtKB-KW"/>
</dbReference>
<dbReference type="GO" id="GO:0050482">
    <property type="term" value="P:arachidonate secretion"/>
    <property type="evidence" value="ECO:0007669"/>
    <property type="project" value="InterPro"/>
</dbReference>
<dbReference type="GO" id="GO:0016042">
    <property type="term" value="P:lipid catabolic process"/>
    <property type="evidence" value="ECO:0007669"/>
    <property type="project" value="UniProtKB-KW"/>
</dbReference>
<dbReference type="GO" id="GO:0006644">
    <property type="term" value="P:phospholipid metabolic process"/>
    <property type="evidence" value="ECO:0007669"/>
    <property type="project" value="InterPro"/>
</dbReference>
<dbReference type="Gene3D" id="1.20.90.10">
    <property type="entry name" value="Phospholipase A2 domain"/>
    <property type="match status" value="1"/>
</dbReference>
<dbReference type="InterPro" id="IPR016090">
    <property type="entry name" value="PLipase_A2_dom"/>
</dbReference>
<dbReference type="InterPro" id="IPR036444">
    <property type="entry name" value="PLipase_A2_dom_sf"/>
</dbReference>
<dbReference type="InterPro" id="IPR033113">
    <property type="entry name" value="PLipase_A2_His_AS"/>
</dbReference>
<dbReference type="PANTHER" id="PTHR12253">
    <property type="entry name" value="RH14732P"/>
    <property type="match status" value="1"/>
</dbReference>
<dbReference type="Pfam" id="PF05826">
    <property type="entry name" value="Phospholip_A2_2"/>
    <property type="match status" value="1"/>
</dbReference>
<dbReference type="SUPFAM" id="SSF48619">
    <property type="entry name" value="Phospholipase A2, PLA2"/>
    <property type="match status" value="1"/>
</dbReference>
<dbReference type="PROSITE" id="PS00118">
    <property type="entry name" value="PA2_HIS"/>
    <property type="match status" value="1"/>
</dbReference>
<protein>
    <recommendedName>
        <fullName evidence="6">Phospholipase A2 heteromtoxin</fullName>
        <shortName evidence="6">HmTx</shortName>
    </recommendedName>
    <component>
        <recommendedName>
            <fullName evidence="6">Heteromtoxin large subunit</fullName>
            <ecNumber>3.1.1.4</ecNumber>
        </recommendedName>
    </component>
    <component>
        <recommendedName>
            <fullName evidence="6">Heteromtoxin small subunit</fullName>
        </recommendedName>
    </component>
</protein>
<name>PA2_HETLA</name>
<evidence type="ECO:0000250" key="1"/>
<evidence type="ECO:0000250" key="2">
    <source>
        <dbReference type="UniProtKB" id="P00630"/>
    </source>
</evidence>
<evidence type="ECO:0000250" key="3">
    <source>
        <dbReference type="UniProtKB" id="Q6T178"/>
    </source>
</evidence>
<evidence type="ECO:0000255" key="4">
    <source>
        <dbReference type="PROSITE-ProRule" id="PRU10035"/>
    </source>
</evidence>
<evidence type="ECO:0000269" key="5">
    <source>
    </source>
</evidence>
<evidence type="ECO:0000303" key="6">
    <source>
    </source>
</evidence>
<evidence type="ECO:0000305" key="7"/>
<keyword id="KW-0106">Calcium</keyword>
<keyword id="KW-0108">Calcium channel impairing toxin</keyword>
<keyword id="KW-0903">Direct protein sequencing</keyword>
<keyword id="KW-1015">Disulfide bond</keyword>
<keyword id="KW-0378">Hydrolase</keyword>
<keyword id="KW-0872">Ion channel impairing toxin</keyword>
<keyword id="KW-0442">Lipid degradation</keyword>
<keyword id="KW-0443">Lipid metabolism</keyword>
<keyword id="KW-0479">Metal-binding</keyword>
<keyword id="KW-0528">Neurotoxin</keyword>
<keyword id="KW-1219">Ryanodine-sensitive calcium-release channel impairing toxin</keyword>
<keyword id="KW-0964">Secreted</keyword>
<keyword id="KW-0732">Signal</keyword>
<keyword id="KW-0800">Toxin</keyword>
<keyword id="KW-0865">Zymogen</keyword>
<comment type="function">
    <text evidence="1">Phospholipase toxin, which catalyzes the calcium-dependent hydrolysis of the 2-acyl groups in 3-sn-phosphoglycerides. Inhibits both skeletal (RYR1) and cardiac (RYR2) ryanodine receptors (calcium release channels). Probably blocks ryanodine receptors by generating a lipid product (By similarity).</text>
</comment>
<comment type="catalytic activity">
    <reaction evidence="4 5">
        <text>a 1,2-diacyl-sn-glycero-3-phosphocholine + H2O = a 1-acyl-sn-glycero-3-phosphocholine + a fatty acid + H(+)</text>
        <dbReference type="Rhea" id="RHEA:15801"/>
        <dbReference type="ChEBI" id="CHEBI:15377"/>
        <dbReference type="ChEBI" id="CHEBI:15378"/>
        <dbReference type="ChEBI" id="CHEBI:28868"/>
        <dbReference type="ChEBI" id="CHEBI:57643"/>
        <dbReference type="ChEBI" id="CHEBI:58168"/>
        <dbReference type="EC" id="3.1.1.4"/>
    </reaction>
</comment>
<comment type="cofactor">
    <cofactor evidence="1">
        <name>Ca(2+)</name>
        <dbReference type="ChEBI" id="CHEBI:29108"/>
    </cofactor>
    <text evidence="1">Binds 1 Ca(2+) ion.</text>
</comment>
<comment type="subunit">
    <text>Heterodimer composed of a large and a small subunits; disulfide-linked.</text>
</comment>
<comment type="subcellular location">
    <subcellularLocation>
        <location>Secreted</location>
    </subcellularLocation>
</comment>
<comment type="tissue specificity">
    <text>Expressed by the venom gland.</text>
</comment>
<comment type="mass spectrometry">
    <text>The measured ranges are 32-135, 141-167.</text>
</comment>
<comment type="similarity">
    <text evidence="7">Belongs to the phospholipase A2 family. Group III subfamily.</text>
</comment>
<comment type="caution">
    <text evidence="7">In contrast to other phospholipases, it lacks the typical Asp active site (Asp-&gt;Glu in position 93).</text>
</comment>
<feature type="signal peptide">
    <location>
        <begin position="1"/>
        <end status="unknown"/>
    </location>
</feature>
<feature type="propeptide" id="PRO_0000429182">
    <location>
        <begin status="unknown"/>
        <end position="31"/>
    </location>
</feature>
<feature type="chain" id="PRO_0000429183" description="Heteromtoxin large subunit">
    <location>
        <begin position="32"/>
        <end position="135"/>
    </location>
</feature>
<feature type="propeptide" id="PRO_0000429184">
    <location>
        <begin position="136"/>
        <end position="140"/>
    </location>
</feature>
<feature type="chain" id="PRO_0000429185" description="Heteromtoxin small subunit">
    <location>
        <begin position="141"/>
        <end position="167"/>
    </location>
</feature>
<feature type="active site" evidence="4">
    <location>
        <position position="64"/>
    </location>
</feature>
<feature type="binding site" evidence="2">
    <location>
        <position position="38"/>
    </location>
    <ligand>
        <name>Ca(2+)</name>
        <dbReference type="ChEBI" id="CHEBI:29108"/>
    </ligand>
</feature>
<feature type="binding site" evidence="2">
    <location>
        <position position="40"/>
    </location>
    <ligand>
        <name>Ca(2+)</name>
        <dbReference type="ChEBI" id="CHEBI:29108"/>
    </ligand>
</feature>
<feature type="binding site" evidence="2">
    <location>
        <position position="42"/>
    </location>
    <ligand>
        <name>Ca(2+)</name>
        <dbReference type="ChEBI" id="CHEBI:29108"/>
    </ligand>
</feature>
<feature type="binding site" evidence="2">
    <location>
        <position position="65"/>
    </location>
    <ligand>
        <name>Ca(2+)</name>
        <dbReference type="ChEBI" id="CHEBI:29108"/>
    </ligand>
</feature>
<feature type="disulfide bond" evidence="3">
    <location>
        <begin position="39"/>
        <end position="61"/>
    </location>
</feature>
<feature type="disulfide bond" evidence="3">
    <location>
        <begin position="60"/>
        <end position="99"/>
    </location>
</feature>
<feature type="disulfide bond" evidence="3">
    <location>
        <begin position="67"/>
        <end position="92"/>
    </location>
</feature>
<feature type="disulfide bond" evidence="3">
    <location>
        <begin position="90"/>
        <end position="127"/>
    </location>
</feature>
<feature type="disulfide bond" description="Interchain (between large and small chains)" evidence="3">
    <location>
        <begin position="132"/>
        <end position="144"/>
    </location>
</feature>
<feature type="sequence conflict" description="In Ref. 1; AA sequence." evidence="7" ref="1">
    <original>A</original>
    <variation>S</variation>
    <location>
        <position position="72"/>
    </location>
</feature>
<feature type="sequence conflict" description="In Ref. 1; AA sequence." evidence="7" ref="1">
    <original>E</original>
    <variation>Q</variation>
    <location>
        <position position="74"/>
    </location>
</feature>
<sequence>MHTPKHAIRRMSKGEMEFFEGRCQRMGEAERTVWGTKWCGSGNEATSGIDLGYFKNLDSCCRTHDHCDNIPAGETKYGLTNEGIYTMMNCKCESVFKQCLKDVTGVFEGPAAAAVRKIYFDLYGNGCYSVQCPAGGRSARTGGCPNGVATYTGETGYGAWLLNKANG</sequence>
<organism>
    <name type="scientific">Heterometrus laoticus</name>
    <name type="common">Thai giant scorpion</name>
    <dbReference type="NCBI Taxonomy" id="217256"/>
    <lineage>
        <taxon>Eukaryota</taxon>
        <taxon>Metazoa</taxon>
        <taxon>Ecdysozoa</taxon>
        <taxon>Arthropoda</taxon>
        <taxon>Chelicerata</taxon>
        <taxon>Arachnida</taxon>
        <taxon>Scorpiones</taxon>
        <taxon>Iurida</taxon>
        <taxon>Scorpionoidea</taxon>
        <taxon>Scorpionidae</taxon>
        <taxon>Heterometrinae</taxon>
        <taxon>Heterometrus</taxon>
    </lineage>
</organism>